<reference key="1">
    <citation type="journal article" date="1993" name="Infect. Immun.">
        <title>The gamma-hemolysin locus of Staphylococcus aureus comprises three linked genes, two of which are identical to the genes for the F and S components of leukocidin.</title>
        <authorList>
            <person name="Cooney J.C."/>
            <person name="Kienle Z."/>
            <person name="Foster T.J."/>
            <person name="O'Toole P.W."/>
        </authorList>
    </citation>
    <scope>NUCLEOTIDE SEQUENCE [GENOMIC DNA]</scope>
</reference>
<reference key="2">
    <citation type="journal article" date="1988" name="J. Gen. Microbiol.">
        <title>Molecular cloning and genetic analysis of the determinant for gamma-lysin, a two-component toxin of Staphylococcus aureus.</title>
        <authorList>
            <person name="Cooney J.C."/>
            <person name="Mulvey M."/>
            <person name="Arbuthnott J."/>
            <person name="Foster T."/>
        </authorList>
    </citation>
    <scope>NUCLEOTIDE SEQUENCE [GENOMIC DNA]</scope>
</reference>
<sequence>MKMNKLVKSSVATSMALLLLSGTANAEGKITPVSVKKVDDKVTLYKTTATADSDKFKISQILTFNFIKDKSYDKDTLVLKATGNINSGFVKPNPNDYDFSKLYWGAKYNVSISSQSNDSVNVVDYAPKNQNEEFQVQNTLGYTFGGDISISNGLSGGLNGNTAFSETINYKQESYRTTLSRNTNYKNVGWGVEAHKIMNNGWGPYGRDSFHPTYGNELFLAGRQSSAYAGQNFIAQHQMPLLSRSNFNPEFLSVLSHRQDGAKKSKITVTYQREMDLYQIRWNGFYWAGANYKNFKTRTFKSTYEIDWENHKVKLLDTKETENNK</sequence>
<dbReference type="EMBL" id="L01055">
    <property type="protein sequence ID" value="AAA26639.1"/>
    <property type="molecule type" value="Genomic_DNA"/>
</dbReference>
<dbReference type="PIR" id="B49238">
    <property type="entry name" value="B49238"/>
</dbReference>
<dbReference type="RefSeq" id="WP_000783428.1">
    <property type="nucleotide sequence ID" value="NZ_WYDB01000001.1"/>
</dbReference>
<dbReference type="PDB" id="1LKF">
    <property type="method" value="X-ray"/>
    <property type="resolution" value="1.90 A"/>
    <property type="chains" value="A=27-325"/>
</dbReference>
<dbReference type="PDB" id="2LKF">
    <property type="method" value="X-ray"/>
    <property type="resolution" value="2.50 A"/>
    <property type="chains" value="A=27-325"/>
</dbReference>
<dbReference type="PDB" id="2QK7">
    <property type="method" value="X-ray"/>
    <property type="resolution" value="2.40 A"/>
    <property type="chains" value="B=27-325"/>
</dbReference>
<dbReference type="PDB" id="3LKF">
    <property type="method" value="X-ray"/>
    <property type="resolution" value="1.90 A"/>
    <property type="chains" value="A=27-325"/>
</dbReference>
<dbReference type="PDB" id="8GZ7">
    <property type="method" value="EM"/>
    <property type="resolution" value="3.50 A"/>
    <property type="chains" value="A/C/E/G=41-325"/>
</dbReference>
<dbReference type="PDBsum" id="1LKF"/>
<dbReference type="PDBsum" id="2LKF"/>
<dbReference type="PDBsum" id="2QK7"/>
<dbReference type="PDBsum" id="3LKF"/>
<dbReference type="PDBsum" id="8GZ7"/>
<dbReference type="EMDB" id="EMD-34391"/>
<dbReference type="SMR" id="P0A077"/>
<dbReference type="TCDB" id="1.C.3.4.2">
    <property type="family name" value="the Alpha-hemolysin channel-forming toxin (Alphahl) family"/>
</dbReference>
<dbReference type="ABCD" id="P0A077">
    <property type="antibodies" value="7 sequenced antibodies"/>
</dbReference>
<dbReference type="OMA" id="QNAKTHT"/>
<dbReference type="EvolutionaryTrace" id="P0A077"/>
<dbReference type="PHI-base" id="PHI:10310"/>
<dbReference type="PHI-base" id="PHI:123356"/>
<dbReference type="GO" id="GO:0005576">
    <property type="term" value="C:extracellular region"/>
    <property type="evidence" value="ECO:0007669"/>
    <property type="project" value="InterPro"/>
</dbReference>
<dbReference type="GO" id="GO:0090729">
    <property type="term" value="F:toxin activity"/>
    <property type="evidence" value="ECO:0007669"/>
    <property type="project" value="UniProtKB-KW"/>
</dbReference>
<dbReference type="GO" id="GO:0051715">
    <property type="term" value="P:cytolysis in another organism"/>
    <property type="evidence" value="ECO:0007669"/>
    <property type="project" value="InterPro"/>
</dbReference>
<dbReference type="Gene3D" id="2.70.240.10">
    <property type="entry name" value="Leukocidin/porin MspA"/>
    <property type="match status" value="1"/>
</dbReference>
<dbReference type="InterPro" id="IPR003963">
    <property type="entry name" value="Bi-component_toxin_staph"/>
</dbReference>
<dbReference type="InterPro" id="IPR016183">
    <property type="entry name" value="Leukocidin/Hemolysin_toxin"/>
</dbReference>
<dbReference type="InterPro" id="IPR036435">
    <property type="entry name" value="Leukocidin/porin_MspA_sf"/>
</dbReference>
<dbReference type="NCBIfam" id="TIGR01002">
    <property type="entry name" value="hlyII"/>
    <property type="match status" value="1"/>
</dbReference>
<dbReference type="Pfam" id="PF07968">
    <property type="entry name" value="Leukocidin"/>
    <property type="match status" value="1"/>
</dbReference>
<dbReference type="PRINTS" id="PR01468">
    <property type="entry name" value="BICOMPNTOXIN"/>
</dbReference>
<dbReference type="SUPFAM" id="SSF56959">
    <property type="entry name" value="Leukocidin-like"/>
    <property type="match status" value="1"/>
</dbReference>
<organism>
    <name type="scientific">Staphylococcus aureus</name>
    <dbReference type="NCBI Taxonomy" id="1280"/>
    <lineage>
        <taxon>Bacteria</taxon>
        <taxon>Bacillati</taxon>
        <taxon>Bacillota</taxon>
        <taxon>Bacilli</taxon>
        <taxon>Bacillales</taxon>
        <taxon>Staphylococcaceae</taxon>
        <taxon>Staphylococcus</taxon>
    </lineage>
</organism>
<gene>
    <name type="primary">hlgB</name>
</gene>
<proteinExistence type="evidence at protein level"/>
<evidence type="ECO:0000250" key="1"/>
<evidence type="ECO:0000250" key="2">
    <source>
        <dbReference type="UniProtKB" id="Q2FVK1"/>
    </source>
</evidence>
<evidence type="ECO:0000255" key="3"/>
<evidence type="ECO:0000305" key="4"/>
<evidence type="ECO:0007829" key="5">
    <source>
        <dbReference type="PDB" id="1LKF"/>
    </source>
</evidence>
<evidence type="ECO:0007829" key="6">
    <source>
        <dbReference type="PDB" id="3LKF"/>
    </source>
</evidence>
<name>HLGB_STAAU</name>
<comment type="function">
    <text evidence="2">Toxin that seems to act by forming pores in the membrane of the cell. Has a hemolytic and a leucotoxic activity. Promotes host AMFR-mediated inflammation by mediating 'Lys-27'-linked ubiquitination of TAB3, TAK1-TAB3 complex formation and phosphorylation of TAK1/MAP3K7. In turn, activates host NF-kappa-B signaling pathway.</text>
</comment>
<comment type="subunit">
    <text evidence="1 2">Toxicity requires sequential binding and synergistic association of a class S and a class F component which form heterooligomeric complexes. HlgB (class F) associates with either hlgA thus forming an AB toxin or with hlgC thus forming a CB toxin (By similarity). Interacts with host AMFR (By similarity).</text>
</comment>
<comment type="similarity">
    <text evidence="4">Belongs to the aerolysin family.</text>
</comment>
<accession>P0A077</accession>
<accession>Q07226</accession>
<protein>
    <recommendedName>
        <fullName>Gamma-hemolysin component B</fullName>
    </recommendedName>
    <alternativeName>
        <fullName>H-gamma-1</fullName>
    </alternativeName>
    <alternativeName>
        <fullName>H-gamma-I</fullName>
    </alternativeName>
</protein>
<keyword id="KW-0002">3D-structure</keyword>
<keyword id="KW-0204">Cytolysis</keyword>
<keyword id="KW-0354">Hemolysis</keyword>
<keyword id="KW-0732">Signal</keyword>
<keyword id="KW-0800">Toxin</keyword>
<keyword id="KW-0843">Virulence</keyword>
<feature type="signal peptide" evidence="3">
    <location>
        <begin position="1"/>
        <end position="25"/>
    </location>
</feature>
<feature type="chain" id="PRO_0000018424" description="Gamma-hemolysin component B">
    <location>
        <begin position="26"/>
        <end position="325"/>
    </location>
</feature>
<feature type="strand" evidence="5">
    <location>
        <begin position="28"/>
        <end position="30"/>
    </location>
</feature>
<feature type="strand" evidence="5">
    <location>
        <begin position="34"/>
        <end position="37"/>
    </location>
</feature>
<feature type="strand" evidence="5">
    <location>
        <begin position="39"/>
        <end position="53"/>
    </location>
</feature>
<feature type="turn" evidence="5">
    <location>
        <begin position="54"/>
        <end position="57"/>
    </location>
</feature>
<feature type="strand" evidence="5">
    <location>
        <begin position="58"/>
        <end position="69"/>
    </location>
</feature>
<feature type="strand" evidence="5">
    <location>
        <begin position="72"/>
        <end position="86"/>
    </location>
</feature>
<feature type="strand" evidence="5">
    <location>
        <begin position="98"/>
        <end position="114"/>
    </location>
</feature>
<feature type="strand" evidence="5">
    <location>
        <begin position="120"/>
        <end position="127"/>
    </location>
</feature>
<feature type="strand" evidence="5">
    <location>
        <begin position="134"/>
        <end position="142"/>
    </location>
</feature>
<feature type="turn" evidence="6">
    <location>
        <begin position="144"/>
        <end position="146"/>
    </location>
</feature>
<feature type="strand" evidence="5">
    <location>
        <begin position="148"/>
        <end position="152"/>
    </location>
</feature>
<feature type="strand" evidence="5">
    <location>
        <begin position="164"/>
        <end position="171"/>
    </location>
</feature>
<feature type="strand" evidence="5">
    <location>
        <begin position="175"/>
        <end position="179"/>
    </location>
</feature>
<feature type="strand" evidence="5">
    <location>
        <begin position="187"/>
        <end position="194"/>
    </location>
</feature>
<feature type="strand" evidence="5">
    <location>
        <begin position="199"/>
        <end position="202"/>
    </location>
</feature>
<feature type="turn" evidence="5">
    <location>
        <begin position="212"/>
        <end position="214"/>
    </location>
</feature>
<feature type="helix" evidence="5">
    <location>
        <begin position="229"/>
        <end position="231"/>
    </location>
</feature>
<feature type="helix" evidence="5">
    <location>
        <begin position="236"/>
        <end position="238"/>
    </location>
</feature>
<feature type="helix" evidence="5">
    <location>
        <begin position="241"/>
        <end position="244"/>
    </location>
</feature>
<feature type="strand" evidence="5">
    <location>
        <begin position="251"/>
        <end position="257"/>
    </location>
</feature>
<feature type="strand" evidence="5">
    <location>
        <begin position="259"/>
        <end position="261"/>
    </location>
</feature>
<feature type="strand" evidence="5">
    <location>
        <begin position="263"/>
        <end position="282"/>
    </location>
</feature>
<feature type="strand" evidence="5">
    <location>
        <begin position="287"/>
        <end position="307"/>
    </location>
</feature>
<feature type="turn" evidence="5">
    <location>
        <begin position="308"/>
        <end position="311"/>
    </location>
</feature>
<feature type="strand" evidence="5">
    <location>
        <begin position="312"/>
        <end position="324"/>
    </location>
</feature>